<dbReference type="EC" id="4.1.1.65" evidence="1"/>
<dbReference type="EMBL" id="AJ251781">
    <property type="protein sequence ID" value="CAC18671.1"/>
    <property type="molecule type" value="Genomic_DNA"/>
</dbReference>
<dbReference type="EMBL" id="CP002038">
    <property type="protein sequence ID" value="ADN00233.1"/>
    <property type="molecule type" value="Genomic_DNA"/>
</dbReference>
<dbReference type="RefSeq" id="WP_013319651.1">
    <property type="nucleotide sequence ID" value="NC_014500.1"/>
</dbReference>
<dbReference type="SMR" id="Q9EV04"/>
<dbReference type="STRING" id="198628.Dda3937_02150"/>
<dbReference type="KEGG" id="ddd:Dda3937_02150"/>
<dbReference type="PATRIC" id="fig|198628.6.peg.3973"/>
<dbReference type="eggNOG" id="COG0688">
    <property type="taxonomic scope" value="Bacteria"/>
</dbReference>
<dbReference type="HOGENOM" id="CLU_029061_4_1_6"/>
<dbReference type="OrthoDB" id="9802030at2"/>
<dbReference type="UniPathway" id="UPA00558">
    <property type="reaction ID" value="UER00616"/>
</dbReference>
<dbReference type="Proteomes" id="UP000006859">
    <property type="component" value="Chromosome"/>
</dbReference>
<dbReference type="GO" id="GO:0005886">
    <property type="term" value="C:plasma membrane"/>
    <property type="evidence" value="ECO:0007669"/>
    <property type="project" value="UniProtKB-SubCell"/>
</dbReference>
<dbReference type="GO" id="GO:0004609">
    <property type="term" value="F:phosphatidylserine decarboxylase activity"/>
    <property type="evidence" value="ECO:0007669"/>
    <property type="project" value="UniProtKB-UniRule"/>
</dbReference>
<dbReference type="GO" id="GO:0006646">
    <property type="term" value="P:phosphatidylethanolamine biosynthetic process"/>
    <property type="evidence" value="ECO:0007669"/>
    <property type="project" value="UniProtKB-UniRule"/>
</dbReference>
<dbReference type="HAMAP" id="MF_00662">
    <property type="entry name" value="PS_decarb_PSD_B_type1"/>
    <property type="match status" value="1"/>
</dbReference>
<dbReference type="InterPro" id="IPR003817">
    <property type="entry name" value="PS_Dcarbxylase"/>
</dbReference>
<dbReference type="InterPro" id="IPR033177">
    <property type="entry name" value="PSD-B"/>
</dbReference>
<dbReference type="InterPro" id="IPR033178">
    <property type="entry name" value="PSD_type1_pro"/>
</dbReference>
<dbReference type="NCBIfam" id="TIGR00163">
    <property type="entry name" value="PS_decarb"/>
    <property type="match status" value="1"/>
</dbReference>
<dbReference type="PANTHER" id="PTHR10067">
    <property type="entry name" value="PHOSPHATIDYLSERINE DECARBOXYLASE"/>
    <property type="match status" value="1"/>
</dbReference>
<dbReference type="PANTHER" id="PTHR10067:SF6">
    <property type="entry name" value="PHOSPHATIDYLSERINE DECARBOXYLASE PROENZYME, MITOCHONDRIAL"/>
    <property type="match status" value="1"/>
</dbReference>
<dbReference type="Pfam" id="PF02666">
    <property type="entry name" value="PS_Dcarbxylase"/>
    <property type="match status" value="1"/>
</dbReference>
<comment type="function">
    <text evidence="1">Catalyzes the formation of phosphatidylethanolamine (PtdEtn) from phosphatidylserine (PtdSer).</text>
</comment>
<comment type="catalytic activity">
    <reaction evidence="1">
        <text>a 1,2-diacyl-sn-glycero-3-phospho-L-serine + H(+) = a 1,2-diacyl-sn-glycero-3-phosphoethanolamine + CO2</text>
        <dbReference type="Rhea" id="RHEA:20828"/>
        <dbReference type="ChEBI" id="CHEBI:15378"/>
        <dbReference type="ChEBI" id="CHEBI:16526"/>
        <dbReference type="ChEBI" id="CHEBI:57262"/>
        <dbReference type="ChEBI" id="CHEBI:64612"/>
        <dbReference type="EC" id="4.1.1.65"/>
    </reaction>
</comment>
<comment type="cofactor">
    <cofactor evidence="1">
        <name>pyruvate</name>
        <dbReference type="ChEBI" id="CHEBI:15361"/>
    </cofactor>
    <text evidence="1">Binds 1 pyruvoyl group covalently per subunit.</text>
</comment>
<comment type="pathway">
    <text evidence="1">Phospholipid metabolism; phosphatidylethanolamine biosynthesis; phosphatidylethanolamine from CDP-diacylglycerol: step 2/2.</text>
</comment>
<comment type="subunit">
    <text evidence="1">Heterodimer of a large membrane-associated beta subunit and a small pyruvoyl-containing alpha subunit.</text>
</comment>
<comment type="subcellular location">
    <subcellularLocation>
        <location evidence="1">Cell membrane</location>
        <topology evidence="1">Peripheral membrane protein</topology>
    </subcellularLocation>
</comment>
<comment type="PTM">
    <text evidence="1">Is synthesized initially as an inactive proenzyme. Formation of the active enzyme involves a self-maturation process in which the active site pyruvoyl group is generated from an internal serine residue via an autocatalytic post-translational modification. Two non-identical subunits are generated from the proenzyme in this reaction, and the pyruvate is formed at the N-terminus of the alpha chain, which is derived from the carboxyl end of the proenzyme. The autoendoproteolytic cleavage occurs by a canonical serine protease mechanism, in which the side chain hydroxyl group of the serine supplies its oxygen atom to form the C-terminus of the beta chain, while the remainder of the serine residue undergoes an oxidative deamination to produce ammonia and the pyruvoyl prosthetic group on the alpha chain. During this reaction, the Ser that is part of the protease active site of the proenzyme becomes the pyruvoyl prosthetic group, which constitutes an essential element of the active site of the mature decarboxylase.</text>
</comment>
<comment type="similarity">
    <text evidence="1">Belongs to the phosphatidylserine decarboxylase family. PSD-B subfamily. Prokaryotic type I sub-subfamily.</text>
</comment>
<organism>
    <name type="scientific">Dickeya dadantii (strain 3937)</name>
    <name type="common">Erwinia chrysanthemi (strain 3937)</name>
    <dbReference type="NCBI Taxonomy" id="198628"/>
    <lineage>
        <taxon>Bacteria</taxon>
        <taxon>Pseudomonadati</taxon>
        <taxon>Pseudomonadota</taxon>
        <taxon>Gammaproteobacteria</taxon>
        <taxon>Enterobacterales</taxon>
        <taxon>Pectobacteriaceae</taxon>
        <taxon>Dickeya</taxon>
    </lineage>
</organism>
<accession>Q9EV04</accession>
<accession>E0SI24</accession>
<proteinExistence type="inferred from homology"/>
<protein>
    <recommendedName>
        <fullName evidence="1">Phosphatidylserine decarboxylase proenzyme</fullName>
        <ecNumber evidence="1">4.1.1.65</ecNumber>
    </recommendedName>
    <component>
        <recommendedName>
            <fullName evidence="1">Phosphatidylserine decarboxylase alpha chain</fullName>
        </recommendedName>
    </component>
    <component>
        <recommendedName>
            <fullName evidence="1">Phosphatidylserine decarboxylase beta chain</fullName>
        </recommendedName>
    </component>
</protein>
<evidence type="ECO:0000255" key="1">
    <source>
        <dbReference type="HAMAP-Rule" id="MF_00662"/>
    </source>
</evidence>
<evidence type="ECO:0000305" key="2"/>
<sequence length="304" mass="33805">MLDRIKIALQHLLPKVWLTQLAGWGADRQAGMLTKLVIDLFARIYKVNMQEAQQPDTASYRSFNDFFVRPLKPGIRPVDPLPNRLVFPADGAISQLGAIDDDRILQAKQHDYTLEALLAGNYIISDLFRDGLFVTTYLSPRDYHRVHMPCDGILRDMIYVPGDLFSVNPLTAANVPNLFARNERVICLFDTPFGPMVQILVGATIVGSIETVWAGVVTPPREGIIKRWAYPMEGEGAVILEKGDEMGRFKLGSTVINLFAKDRVQLMPGLASQSVTRMGEAMAEALDEDILARMSANDDTDTTP</sequence>
<reference key="1">
    <citation type="journal article" date="2001" name="Mol. Microbiol.">
        <title>Glycine betaine loses its osmoprotective activity in a bspA strain of Erwinia chrysanthemi.</title>
        <authorList>
            <person name="Touze T."/>
            <person name="Gouesbet G."/>
            <person name="Boiangiu C."/>
            <person name="Jebbar M."/>
            <person name="Bonnassie S."/>
            <person name="Blanco C."/>
        </authorList>
    </citation>
    <scope>NUCLEOTIDE SEQUENCE [GENOMIC DNA]</scope>
    <source>
        <strain>3937</strain>
    </source>
</reference>
<reference key="2">
    <citation type="journal article" date="2011" name="J. Bacteriol.">
        <title>Genome sequence of the plant-pathogenic bacterium Dickeya dadantii 3937.</title>
        <authorList>
            <person name="Glasner J.D."/>
            <person name="Yang C.H."/>
            <person name="Reverchon S."/>
            <person name="Hugouvieux-Cotte-Pattat N."/>
            <person name="Condemine G."/>
            <person name="Bohin J.P."/>
            <person name="Van Gijsegem F."/>
            <person name="Yang S."/>
            <person name="Franza T."/>
            <person name="Expert D."/>
            <person name="Plunkett G. III"/>
            <person name="San Francisco M.J."/>
            <person name="Charkowski A.O."/>
            <person name="Py B."/>
            <person name="Bell K."/>
            <person name="Rauscher L."/>
            <person name="Rodriguez-Palenzuela P."/>
            <person name="Toussaint A."/>
            <person name="Holeva M.C."/>
            <person name="He S.Y."/>
            <person name="Douet V."/>
            <person name="Boccara M."/>
            <person name="Blanco C."/>
            <person name="Toth I."/>
            <person name="Anderson B.D."/>
            <person name="Biehl B.S."/>
            <person name="Mau B."/>
            <person name="Flynn S.M."/>
            <person name="Barras F."/>
            <person name="Lindeberg M."/>
            <person name="Birch P.R."/>
            <person name="Tsuyumu S."/>
            <person name="Shi X."/>
            <person name="Hibbing M."/>
            <person name="Yap M.N."/>
            <person name="Carpentier M."/>
            <person name="Dassa E."/>
            <person name="Umehara M."/>
            <person name="Kim J.F."/>
            <person name="Rusch M."/>
            <person name="Soni P."/>
            <person name="Mayhew G.F."/>
            <person name="Fouts D.E."/>
            <person name="Gill S.R."/>
            <person name="Blattner F.R."/>
            <person name="Keen N.T."/>
            <person name="Perna N.T."/>
        </authorList>
    </citation>
    <scope>NUCLEOTIDE SEQUENCE [LARGE SCALE GENOMIC DNA]</scope>
    <source>
        <strain>3937</strain>
    </source>
</reference>
<name>PSD_DICD3</name>
<feature type="chain" id="PRO_0000029653" description="Phosphatidylserine decarboxylase beta chain" evidence="1">
    <location>
        <begin position="1"/>
        <end position="252"/>
    </location>
</feature>
<feature type="chain" id="PRO_0000029654" description="Phosphatidylserine decarboxylase alpha chain" evidence="1">
    <location>
        <begin position="253"/>
        <end position="304"/>
    </location>
</feature>
<feature type="active site" description="Charge relay system; for autoendoproteolytic cleavage activity" evidence="1">
    <location>
        <position position="90"/>
    </location>
</feature>
<feature type="active site" description="Charge relay system; for autoendoproteolytic cleavage activity" evidence="1">
    <location>
        <position position="147"/>
    </location>
</feature>
<feature type="active site" description="Charge relay system; for autoendoproteolytic cleavage activity" evidence="1">
    <location>
        <position position="253"/>
    </location>
</feature>
<feature type="active site" description="Schiff-base intermediate with substrate; via pyruvic acid; for decarboxylase activity" evidence="1">
    <location>
        <position position="253"/>
    </location>
</feature>
<feature type="site" description="Cleavage (non-hydrolytic); by autocatalysis" evidence="1">
    <location>
        <begin position="252"/>
        <end position="253"/>
    </location>
</feature>
<feature type="modified residue" description="Pyruvic acid (Ser); by autocatalysis" evidence="1">
    <location>
        <position position="253"/>
    </location>
</feature>
<feature type="sequence conflict" description="In Ref. 1; CAC18671." evidence="2" ref="1">
    <original>I</original>
    <variation>Y</variation>
    <location>
        <position position="5"/>
    </location>
</feature>
<feature type="sequence conflict" description="In Ref. 1; CAC18671." evidence="2" ref="1">
    <original>A</original>
    <variation>V</variation>
    <location>
        <position position="8"/>
    </location>
</feature>
<feature type="sequence conflict" description="In Ref. 1; CAC18671." evidence="2" ref="1">
    <original>H</original>
    <variation>Y</variation>
    <location>
        <position position="11"/>
    </location>
</feature>
<feature type="sequence conflict" description="In Ref. 1; CAC18671." evidence="2" ref="1">
    <original>LA</original>
    <variation>QP</variation>
    <location>
        <begin position="21"/>
        <end position="22"/>
    </location>
</feature>
<feature type="sequence conflict" description="In Ref. 1; CAC18671." evidence="2" ref="1">
    <original>GA</original>
    <variation>EP</variation>
    <location>
        <begin position="25"/>
        <end position="26"/>
    </location>
</feature>
<feature type="sequence conflict" description="In Ref. 1; CAC18671." evidence="2" ref="1">
    <original>G</original>
    <variation>V</variation>
    <location>
        <position position="120"/>
    </location>
</feature>
<keyword id="KW-1003">Cell membrane</keyword>
<keyword id="KW-0210">Decarboxylase</keyword>
<keyword id="KW-0444">Lipid biosynthesis</keyword>
<keyword id="KW-0443">Lipid metabolism</keyword>
<keyword id="KW-0456">Lyase</keyword>
<keyword id="KW-0472">Membrane</keyword>
<keyword id="KW-0594">Phospholipid biosynthesis</keyword>
<keyword id="KW-1208">Phospholipid metabolism</keyword>
<keyword id="KW-0670">Pyruvate</keyword>
<keyword id="KW-1185">Reference proteome</keyword>
<keyword id="KW-0865">Zymogen</keyword>
<gene>
    <name evidence="1" type="primary">psd</name>
    <name type="ordered locus">Dda3937_02150</name>
</gene>